<sequence>MPELPEVEVTRRGLEPLIGATVTQAVIRQPAMRWPIPSHLPQVLHGARLLELRRRGKYIIARFESGCLILHLGMSGRLCLLESDTFPEKHDHFDLHFADGRVMRMRDPRRFGAVLWAGDQPDEHSLLKVLGQEPLDEAFNGEFLQQAIRTRSSPIKTVIMDSHLVVGVGNIYASESLFRAGIHPETPARALTLAQCRRLVEEVKLTLQDALQAGGSSLRDFFGADGNPGYFQQTYFVYGRTGQPCRVCQTPIAVLRLGQRSTFYCPACQQGQPPSNAMP</sequence>
<comment type="function">
    <text evidence="2">Involved in base excision repair of DNA damaged by oxidation or by mutagenic agents. Acts as a DNA glycosylase that recognizes and removes damaged bases. Has a preference for oxidized purines, such as 7,8-dihydro-8-oxoguanine (8-oxoG). Has AP (apurinic/apyrimidinic) lyase activity and introduces nicks in the DNA strand. Cleaves the DNA backbone by beta-delta elimination to generate a single-strand break at the site of the removed base with both 3'- and 5'-phosphates.</text>
</comment>
<comment type="catalytic activity">
    <reaction evidence="2">
        <text>Hydrolysis of DNA containing ring-opened 7-methylguanine residues, releasing 2,6-diamino-4-hydroxy-5-(N-methyl)formamidopyrimidine.</text>
        <dbReference type="EC" id="3.2.2.23"/>
    </reaction>
</comment>
<comment type="catalytic activity">
    <reaction evidence="2">
        <text>2'-deoxyribonucleotide-(2'-deoxyribose 5'-phosphate)-2'-deoxyribonucleotide-DNA = a 3'-end 2'-deoxyribonucleotide-(2,3-dehydro-2,3-deoxyribose 5'-phosphate)-DNA + a 5'-end 5'-phospho-2'-deoxyribonucleoside-DNA + H(+)</text>
        <dbReference type="Rhea" id="RHEA:66592"/>
        <dbReference type="Rhea" id="RHEA-COMP:13180"/>
        <dbReference type="Rhea" id="RHEA-COMP:16897"/>
        <dbReference type="Rhea" id="RHEA-COMP:17067"/>
        <dbReference type="ChEBI" id="CHEBI:15378"/>
        <dbReference type="ChEBI" id="CHEBI:136412"/>
        <dbReference type="ChEBI" id="CHEBI:157695"/>
        <dbReference type="ChEBI" id="CHEBI:167181"/>
        <dbReference type="EC" id="4.2.99.18"/>
    </reaction>
</comment>
<comment type="cofactor">
    <cofactor evidence="2">
        <name>Zn(2+)</name>
        <dbReference type="ChEBI" id="CHEBI:29105"/>
    </cofactor>
    <text evidence="2">Binds 1 zinc ion per subunit.</text>
</comment>
<comment type="subunit">
    <text evidence="2">Monomer.</text>
</comment>
<comment type="similarity">
    <text evidence="2">Belongs to the FPG family.</text>
</comment>
<feature type="initiator methionine" description="Removed" evidence="1">
    <location>
        <position position="1"/>
    </location>
</feature>
<feature type="chain" id="PRO_1000008715" description="Formamidopyrimidine-DNA glycosylase">
    <location>
        <begin position="2"/>
        <end position="279"/>
    </location>
</feature>
<feature type="zinc finger region" description="FPG-type" evidence="2">
    <location>
        <begin position="236"/>
        <end position="270"/>
    </location>
</feature>
<feature type="active site" description="Schiff-base intermediate with DNA" evidence="2">
    <location>
        <position position="2"/>
    </location>
</feature>
<feature type="active site" description="Proton donor" evidence="2">
    <location>
        <position position="3"/>
    </location>
</feature>
<feature type="active site" description="Proton donor; for beta-elimination activity" evidence="2">
    <location>
        <position position="57"/>
    </location>
</feature>
<feature type="active site" description="Proton donor; for delta-elimination activity" evidence="2">
    <location>
        <position position="260"/>
    </location>
</feature>
<feature type="binding site" evidence="2">
    <location>
        <position position="90"/>
    </location>
    <ligand>
        <name>DNA</name>
        <dbReference type="ChEBI" id="CHEBI:16991"/>
    </ligand>
</feature>
<feature type="binding site" evidence="2">
    <location>
        <position position="109"/>
    </location>
    <ligand>
        <name>DNA</name>
        <dbReference type="ChEBI" id="CHEBI:16991"/>
    </ligand>
</feature>
<feature type="binding site" evidence="2">
    <location>
        <position position="151"/>
    </location>
    <ligand>
        <name>DNA</name>
        <dbReference type="ChEBI" id="CHEBI:16991"/>
    </ligand>
</feature>
<name>FPG_METFK</name>
<reference key="1">
    <citation type="submission" date="2006-03" db="EMBL/GenBank/DDBJ databases">
        <title>Complete sequence of Methylobacillus flagellatus KT.</title>
        <authorList>
            <consortium name="US DOE Joint Genome Institute"/>
            <person name="Copeland A."/>
            <person name="Lucas S."/>
            <person name="Lapidus A."/>
            <person name="Barry K."/>
            <person name="Detter J.C."/>
            <person name="Glavina del Rio T."/>
            <person name="Hammon N."/>
            <person name="Israni S."/>
            <person name="Dalin E."/>
            <person name="Tice H."/>
            <person name="Pitluck S."/>
            <person name="Brettin T."/>
            <person name="Bruce D."/>
            <person name="Han C."/>
            <person name="Tapia R."/>
            <person name="Saunders E."/>
            <person name="Gilna P."/>
            <person name="Schmutz J."/>
            <person name="Larimer F."/>
            <person name="Land M."/>
            <person name="Kyrpides N."/>
            <person name="Anderson I."/>
            <person name="Richardson P."/>
        </authorList>
    </citation>
    <scope>NUCLEOTIDE SEQUENCE [LARGE SCALE GENOMIC DNA]</scope>
    <source>
        <strain>ATCC 51484 / DSM 6875 / VKM B-1610 / KT</strain>
    </source>
</reference>
<proteinExistence type="inferred from homology"/>
<gene>
    <name evidence="2" type="primary">mutM</name>
    <name evidence="2" type="synonym">fpg</name>
    <name type="ordered locus">Mfla_0686</name>
</gene>
<protein>
    <recommendedName>
        <fullName evidence="2">Formamidopyrimidine-DNA glycosylase</fullName>
        <shortName evidence="2">Fapy-DNA glycosylase</shortName>
        <ecNumber evidence="2">3.2.2.23</ecNumber>
    </recommendedName>
    <alternativeName>
        <fullName evidence="2">DNA-(apurinic or apyrimidinic site) lyase MutM</fullName>
        <shortName evidence="2">AP lyase MutM</shortName>
        <ecNumber evidence="2">4.2.99.18</ecNumber>
    </alternativeName>
</protein>
<evidence type="ECO:0000250" key="1"/>
<evidence type="ECO:0000255" key="2">
    <source>
        <dbReference type="HAMAP-Rule" id="MF_00103"/>
    </source>
</evidence>
<dbReference type="EC" id="3.2.2.23" evidence="2"/>
<dbReference type="EC" id="4.2.99.18" evidence="2"/>
<dbReference type="EMBL" id="CP000284">
    <property type="protein sequence ID" value="ABE48954.1"/>
    <property type="molecule type" value="Genomic_DNA"/>
</dbReference>
<dbReference type="RefSeq" id="WP_011479051.1">
    <property type="nucleotide sequence ID" value="NC_007947.1"/>
</dbReference>
<dbReference type="SMR" id="Q1H3I3"/>
<dbReference type="STRING" id="265072.Mfla_0686"/>
<dbReference type="KEGG" id="mfa:Mfla_0686"/>
<dbReference type="eggNOG" id="COG0266">
    <property type="taxonomic scope" value="Bacteria"/>
</dbReference>
<dbReference type="HOGENOM" id="CLU_038423_1_1_4"/>
<dbReference type="OrthoDB" id="9800855at2"/>
<dbReference type="Proteomes" id="UP000002440">
    <property type="component" value="Chromosome"/>
</dbReference>
<dbReference type="GO" id="GO:0034039">
    <property type="term" value="F:8-oxo-7,8-dihydroguanine DNA N-glycosylase activity"/>
    <property type="evidence" value="ECO:0007669"/>
    <property type="project" value="TreeGrafter"/>
</dbReference>
<dbReference type="GO" id="GO:0140078">
    <property type="term" value="F:class I DNA-(apurinic or apyrimidinic site) endonuclease activity"/>
    <property type="evidence" value="ECO:0007669"/>
    <property type="project" value="UniProtKB-EC"/>
</dbReference>
<dbReference type="GO" id="GO:0003684">
    <property type="term" value="F:damaged DNA binding"/>
    <property type="evidence" value="ECO:0007669"/>
    <property type="project" value="InterPro"/>
</dbReference>
<dbReference type="GO" id="GO:0008270">
    <property type="term" value="F:zinc ion binding"/>
    <property type="evidence" value="ECO:0007669"/>
    <property type="project" value="UniProtKB-UniRule"/>
</dbReference>
<dbReference type="GO" id="GO:0006284">
    <property type="term" value="P:base-excision repair"/>
    <property type="evidence" value="ECO:0007669"/>
    <property type="project" value="InterPro"/>
</dbReference>
<dbReference type="CDD" id="cd08966">
    <property type="entry name" value="EcFpg-like_N"/>
    <property type="match status" value="1"/>
</dbReference>
<dbReference type="FunFam" id="1.10.8.50:FF:000003">
    <property type="entry name" value="Formamidopyrimidine-DNA glycosylase"/>
    <property type="match status" value="1"/>
</dbReference>
<dbReference type="FunFam" id="3.20.190.10:FF:000001">
    <property type="entry name" value="Formamidopyrimidine-DNA glycosylase"/>
    <property type="match status" value="1"/>
</dbReference>
<dbReference type="Gene3D" id="1.10.8.50">
    <property type="match status" value="1"/>
</dbReference>
<dbReference type="Gene3D" id="3.20.190.10">
    <property type="entry name" value="MutM-like, N-terminal"/>
    <property type="match status" value="1"/>
</dbReference>
<dbReference type="HAMAP" id="MF_00103">
    <property type="entry name" value="Fapy_DNA_glycosyl"/>
    <property type="match status" value="1"/>
</dbReference>
<dbReference type="InterPro" id="IPR015886">
    <property type="entry name" value="DNA_glyclase/AP_lyase_DNA-bd"/>
</dbReference>
<dbReference type="InterPro" id="IPR020629">
    <property type="entry name" value="Formamido-pyr_DNA_Glyclase"/>
</dbReference>
<dbReference type="InterPro" id="IPR012319">
    <property type="entry name" value="FPG_cat"/>
</dbReference>
<dbReference type="InterPro" id="IPR035937">
    <property type="entry name" value="MutM-like_N-ter"/>
</dbReference>
<dbReference type="InterPro" id="IPR010979">
    <property type="entry name" value="Ribosomal_uS13-like_H2TH"/>
</dbReference>
<dbReference type="InterPro" id="IPR000214">
    <property type="entry name" value="Znf_DNA_glyclase/AP_lyase"/>
</dbReference>
<dbReference type="InterPro" id="IPR010663">
    <property type="entry name" value="Znf_FPG/IleRS"/>
</dbReference>
<dbReference type="NCBIfam" id="TIGR00577">
    <property type="entry name" value="fpg"/>
    <property type="match status" value="1"/>
</dbReference>
<dbReference type="NCBIfam" id="NF002211">
    <property type="entry name" value="PRK01103.1"/>
    <property type="match status" value="1"/>
</dbReference>
<dbReference type="PANTHER" id="PTHR22993">
    <property type="entry name" value="FORMAMIDOPYRIMIDINE-DNA GLYCOSYLASE"/>
    <property type="match status" value="1"/>
</dbReference>
<dbReference type="PANTHER" id="PTHR22993:SF9">
    <property type="entry name" value="FORMAMIDOPYRIMIDINE-DNA GLYCOSYLASE"/>
    <property type="match status" value="1"/>
</dbReference>
<dbReference type="Pfam" id="PF01149">
    <property type="entry name" value="Fapy_DNA_glyco"/>
    <property type="match status" value="1"/>
</dbReference>
<dbReference type="Pfam" id="PF06831">
    <property type="entry name" value="H2TH"/>
    <property type="match status" value="1"/>
</dbReference>
<dbReference type="Pfam" id="PF06827">
    <property type="entry name" value="zf-FPG_IleRS"/>
    <property type="match status" value="1"/>
</dbReference>
<dbReference type="SMART" id="SM00898">
    <property type="entry name" value="Fapy_DNA_glyco"/>
    <property type="match status" value="1"/>
</dbReference>
<dbReference type="SMART" id="SM01232">
    <property type="entry name" value="H2TH"/>
    <property type="match status" value="1"/>
</dbReference>
<dbReference type="SUPFAM" id="SSF57716">
    <property type="entry name" value="Glucocorticoid receptor-like (DNA-binding domain)"/>
    <property type="match status" value="1"/>
</dbReference>
<dbReference type="SUPFAM" id="SSF81624">
    <property type="entry name" value="N-terminal domain of MutM-like DNA repair proteins"/>
    <property type="match status" value="1"/>
</dbReference>
<dbReference type="SUPFAM" id="SSF46946">
    <property type="entry name" value="S13-like H2TH domain"/>
    <property type="match status" value="1"/>
</dbReference>
<dbReference type="PROSITE" id="PS51068">
    <property type="entry name" value="FPG_CAT"/>
    <property type="match status" value="1"/>
</dbReference>
<dbReference type="PROSITE" id="PS51066">
    <property type="entry name" value="ZF_FPG_2"/>
    <property type="match status" value="1"/>
</dbReference>
<accession>Q1H3I3</accession>
<keyword id="KW-0227">DNA damage</keyword>
<keyword id="KW-0234">DNA repair</keyword>
<keyword id="KW-0238">DNA-binding</keyword>
<keyword id="KW-0326">Glycosidase</keyword>
<keyword id="KW-0378">Hydrolase</keyword>
<keyword id="KW-0456">Lyase</keyword>
<keyword id="KW-0479">Metal-binding</keyword>
<keyword id="KW-0511">Multifunctional enzyme</keyword>
<keyword id="KW-1185">Reference proteome</keyword>
<keyword id="KW-0862">Zinc</keyword>
<keyword id="KW-0863">Zinc-finger</keyword>
<organism>
    <name type="scientific">Methylobacillus flagellatus (strain ATCC 51484 / DSM 6875 / VKM B-1610 / KT)</name>
    <dbReference type="NCBI Taxonomy" id="265072"/>
    <lineage>
        <taxon>Bacteria</taxon>
        <taxon>Pseudomonadati</taxon>
        <taxon>Pseudomonadota</taxon>
        <taxon>Betaproteobacteria</taxon>
        <taxon>Nitrosomonadales</taxon>
        <taxon>Methylophilaceae</taxon>
        <taxon>Methylobacillus</taxon>
    </lineage>
</organism>